<feature type="chain" id="PRO_0000448085" description="Type VII secretion system protein EsaG">
    <location>
        <begin position="1"/>
        <end position="163"/>
    </location>
</feature>
<feature type="helix" evidence="3">
    <location>
        <begin position="3"/>
        <end position="21"/>
    </location>
</feature>
<feature type="strand" evidence="3">
    <location>
        <begin position="27"/>
        <end position="35"/>
    </location>
</feature>
<feature type="strand" evidence="3">
    <location>
        <begin position="40"/>
        <end position="46"/>
    </location>
</feature>
<feature type="helix" evidence="3">
    <location>
        <begin position="57"/>
        <end position="59"/>
    </location>
</feature>
<feature type="helix" evidence="3">
    <location>
        <begin position="60"/>
        <end position="63"/>
    </location>
</feature>
<feature type="helix" evidence="3">
    <location>
        <begin position="68"/>
        <end position="91"/>
    </location>
</feature>
<feature type="strand" evidence="3">
    <location>
        <begin position="98"/>
        <end position="105"/>
    </location>
</feature>
<feature type="strand" evidence="3">
    <location>
        <begin position="110"/>
        <end position="115"/>
    </location>
</feature>
<feature type="helix" evidence="3">
    <location>
        <begin position="119"/>
        <end position="122"/>
    </location>
</feature>
<feature type="helix" evidence="3">
    <location>
        <begin position="126"/>
        <end position="137"/>
    </location>
</feature>
<feature type="helix" evidence="3">
    <location>
        <begin position="145"/>
        <end position="159"/>
    </location>
</feature>
<organism>
    <name type="scientific">Staphylococcus aureus (strain NCTC 8325 / PS 47)</name>
    <dbReference type="NCBI Taxonomy" id="93061"/>
    <lineage>
        <taxon>Bacteria</taxon>
        <taxon>Bacillati</taxon>
        <taxon>Bacillota</taxon>
        <taxon>Bacilli</taxon>
        <taxon>Bacillales</taxon>
        <taxon>Staphylococcaceae</taxon>
        <taxon>Staphylococcus</taxon>
    </lineage>
</organism>
<comment type="function">
    <text evidence="1">Component of the type VII secretion system (Ess). Also acts as part of toxin-antitoxin system. Counteracts the toxic effect of EssD via direct interaction.</text>
</comment>
<comment type="subunit">
    <text evidence="1">Interacts with EssD (via C-terminus) (PubMed:27723728). Interacts with EssE (PubMed:27723728).</text>
</comment>
<comment type="subcellular location">
    <subcellularLocation>
        <location evidence="1">Cytoplasm</location>
    </subcellularLocation>
</comment>
<protein>
    <recommendedName>
        <fullName>Type VII secretion system protein EsaG</fullName>
    </recommendedName>
</protein>
<dbReference type="EMBL" id="CP000253">
    <property type="protein sequence ID" value="ABD29442.1"/>
    <property type="molecule type" value="Genomic_DNA"/>
</dbReference>
<dbReference type="RefSeq" id="WP_000142049.1">
    <property type="nucleotide sequence ID" value="NZ_LS483365.1"/>
</dbReference>
<dbReference type="RefSeq" id="YP_498862.1">
    <property type="nucleotide sequence ID" value="NC_007795.1"/>
</dbReference>
<dbReference type="PDB" id="8GUO">
    <property type="method" value="X-ray"/>
    <property type="resolution" value="2.59 A"/>
    <property type="chains" value="A=1-162"/>
</dbReference>
<dbReference type="PDB" id="8GUP">
    <property type="method" value="X-ray"/>
    <property type="resolution" value="2.30 A"/>
    <property type="chains" value="A/B=1-162"/>
</dbReference>
<dbReference type="PDBsum" id="8GUO"/>
<dbReference type="PDBsum" id="8GUP"/>
<dbReference type="SMR" id="Q2G178"/>
<dbReference type="STRING" id="93061.SAOUHSC_00269"/>
<dbReference type="PaxDb" id="1280-SAXN108_0277"/>
<dbReference type="GeneID" id="3919210"/>
<dbReference type="KEGG" id="sao:SAOUHSC_00269"/>
<dbReference type="PATRIC" id="fig|93061.5.peg.247"/>
<dbReference type="eggNOG" id="ENOG5032YNG">
    <property type="taxonomic scope" value="Bacteria"/>
</dbReference>
<dbReference type="HOGENOM" id="CLU_107164_0_0_9"/>
<dbReference type="OrthoDB" id="1633905at2"/>
<dbReference type="Proteomes" id="UP000008816">
    <property type="component" value="Chromosome"/>
</dbReference>
<dbReference type="GO" id="GO:0005737">
    <property type="term" value="C:cytoplasm"/>
    <property type="evidence" value="ECO:0007669"/>
    <property type="project" value="UniProtKB-SubCell"/>
</dbReference>
<dbReference type="Gene3D" id="3.30.500.20">
    <property type="entry name" value="BH3703-like domains"/>
    <property type="match status" value="1"/>
</dbReference>
<dbReference type="InterPro" id="IPR006728">
    <property type="entry name" value="YezG-like"/>
</dbReference>
<dbReference type="InterPro" id="IPR036170">
    <property type="entry name" value="YezG-like_sf"/>
</dbReference>
<dbReference type="NCBIfam" id="TIGR01741">
    <property type="entry name" value="staph_tand_hypo"/>
    <property type="match status" value="1"/>
</dbReference>
<dbReference type="Pfam" id="PF04634">
    <property type="entry name" value="YezG-like"/>
    <property type="match status" value="1"/>
</dbReference>
<dbReference type="SUPFAM" id="SSF160424">
    <property type="entry name" value="BH3703-like"/>
    <property type="match status" value="1"/>
</dbReference>
<proteinExistence type="evidence at protein level"/>
<reference key="1">
    <citation type="book" date="2006" name="Gram positive pathogens, 2nd edition">
        <title>The Staphylococcus aureus NCTC 8325 genome.</title>
        <editorList>
            <person name="Fischetti V."/>
            <person name="Novick R."/>
            <person name="Ferretti J."/>
            <person name="Portnoy D."/>
            <person name="Rood J."/>
        </editorList>
        <authorList>
            <person name="Gillaspy A.F."/>
            <person name="Worrell V."/>
            <person name="Orvis J."/>
            <person name="Roe B.A."/>
            <person name="Dyer D.W."/>
            <person name="Iandolo J.J."/>
        </authorList>
    </citation>
    <scope>NUCLEOTIDE SEQUENCE [LARGE SCALE GENOMIC DNA]</scope>
    <source>
        <strain>NCTC 8325 / PS 47</strain>
    </source>
</reference>
<reference key="2">
    <citation type="journal article" date="2016" name="Nat. Microbiol.">
        <title>The type VII secretion system of Staphylococcus aureus secretes a nuclease toxin that targets competitor bacteria.</title>
        <authorList>
            <person name="Cao Z."/>
            <person name="Casabona M.G."/>
            <person name="Kneuper H."/>
            <person name="Chalmers J.D."/>
            <person name="Palmer T."/>
        </authorList>
    </citation>
    <scope>FUNCTION</scope>
    <scope>SUBCELLULAR LOCATION</scope>
    <scope>INTERACTION WITH ESSD AND ESSE</scope>
    <source>
        <strain>NCTC 8325 / PS 47</strain>
    </source>
</reference>
<accession>Q2G178</accession>
<name>ESSG_STAA8</name>
<evidence type="ECO:0000269" key="1">
    <source>
    </source>
</evidence>
<evidence type="ECO:0000303" key="2">
    <source>
    </source>
</evidence>
<evidence type="ECO:0007829" key="3">
    <source>
        <dbReference type="PDB" id="8GUP"/>
    </source>
</evidence>
<sequence length="163" mass="19732">MTFEEKLSKIYNEIANEISSMIPVEWEKVYTMAYIDDGGGEVFFNYTKPGSDDLNYYTNIPKEYNISVQVFDDLWMDLYDLFEELRDLFKEEDLEPWTSCEFDFTREGELKVSFDYIDWINSEFGQIGRQNYYKYRKFGILPETEYEINKVKEIEQYIKELEE</sequence>
<gene>
    <name evidence="2" type="primary">essG</name>
    <name type="synonym">esaG</name>
    <name type="ordered locus">SAOUHSC_00269</name>
</gene>
<keyword id="KW-0002">3D-structure</keyword>
<keyword id="KW-0963">Cytoplasm</keyword>
<keyword id="KW-1185">Reference proteome</keyword>
<keyword id="KW-0843">Virulence</keyword>